<sequence length="325" mass="36976">MSETASWQPSASIPNLLKRAAIMAEIRRFFADRGVLEVETPCMSQATVTDIHLVPFETRFVGPGHSQGMNLWLMTSPEYHMKRLLVAGCGPVFQLCRSFRNEEMGRYHNPEFTMLEWYRPHYDMYRLMNEVDDLLQQVLDCPAAESLSYQQAFLRYLEIDPLSADKTQLREVAAKLDLSNVADTEEDRDTLLQLLFTFGVEPNIGKEKPTFVYHFPASQASLAQISTEDHRVAERFEVYYKGIELANGFHELTDAREQQQRFEQDNRKRAARGLPQHPIDQNLIEALKVGMPDCSGVALGVDRLVMLALGAETLAEVIAFSVDRA</sequence>
<protein>
    <recommendedName>
        <fullName evidence="1">Elongation factor P--(R)-beta-lysine ligase</fullName>
        <shortName evidence="1">EF-P--(R)-beta-lysine ligase</shortName>
        <ecNumber evidence="1">6.3.2.-</ecNumber>
    </recommendedName>
    <alternativeName>
        <fullName evidence="1">EF-P post-translational modification enzyme A</fullName>
    </alternativeName>
    <alternativeName>
        <fullName evidence="1">EF-P-lysine lysyltransferase</fullName>
    </alternativeName>
</protein>
<name>EPMA_ECO24</name>
<evidence type="ECO:0000255" key="1">
    <source>
        <dbReference type="HAMAP-Rule" id="MF_00174"/>
    </source>
</evidence>
<gene>
    <name evidence="1" type="primary">epmA</name>
    <name type="synonym">yjeA</name>
    <name type="ordered locus">EcE24377A_4714</name>
</gene>
<accession>A7ZV28</accession>
<organism>
    <name type="scientific">Escherichia coli O139:H28 (strain E24377A / ETEC)</name>
    <dbReference type="NCBI Taxonomy" id="331111"/>
    <lineage>
        <taxon>Bacteria</taxon>
        <taxon>Pseudomonadati</taxon>
        <taxon>Pseudomonadota</taxon>
        <taxon>Gammaproteobacteria</taxon>
        <taxon>Enterobacterales</taxon>
        <taxon>Enterobacteriaceae</taxon>
        <taxon>Escherichia</taxon>
    </lineage>
</organism>
<reference key="1">
    <citation type="journal article" date="2008" name="J. Bacteriol.">
        <title>The pangenome structure of Escherichia coli: comparative genomic analysis of E. coli commensal and pathogenic isolates.</title>
        <authorList>
            <person name="Rasko D.A."/>
            <person name="Rosovitz M.J."/>
            <person name="Myers G.S.A."/>
            <person name="Mongodin E.F."/>
            <person name="Fricke W.F."/>
            <person name="Gajer P."/>
            <person name="Crabtree J."/>
            <person name="Sebaihia M."/>
            <person name="Thomson N.R."/>
            <person name="Chaudhuri R."/>
            <person name="Henderson I.R."/>
            <person name="Sperandio V."/>
            <person name="Ravel J."/>
        </authorList>
    </citation>
    <scope>NUCLEOTIDE SEQUENCE [LARGE SCALE GENOMIC DNA]</scope>
    <source>
        <strain>E24377A / ETEC</strain>
    </source>
</reference>
<feature type="chain" id="PRO_1000058326" description="Elongation factor P--(R)-beta-lysine ligase">
    <location>
        <begin position="1"/>
        <end position="325"/>
    </location>
</feature>
<feature type="binding site" evidence="1">
    <location>
        <begin position="76"/>
        <end position="78"/>
    </location>
    <ligand>
        <name>substrate</name>
    </ligand>
</feature>
<feature type="binding site" evidence="1">
    <location>
        <begin position="100"/>
        <end position="102"/>
    </location>
    <ligand>
        <name>ATP</name>
        <dbReference type="ChEBI" id="CHEBI:30616"/>
    </ligand>
</feature>
<feature type="binding site" evidence="1">
    <location>
        <position position="109"/>
    </location>
    <ligand>
        <name>ATP</name>
        <dbReference type="ChEBI" id="CHEBI:30616"/>
    </ligand>
</feature>
<feature type="binding site" evidence="1">
    <location>
        <position position="118"/>
    </location>
    <ligand>
        <name>substrate</name>
    </ligand>
</feature>
<feature type="binding site" evidence="1">
    <location>
        <begin position="244"/>
        <end position="245"/>
    </location>
    <ligand>
        <name>ATP</name>
        <dbReference type="ChEBI" id="CHEBI:30616"/>
    </ligand>
</feature>
<feature type="binding site" evidence="1">
    <location>
        <position position="251"/>
    </location>
    <ligand>
        <name>substrate</name>
    </ligand>
</feature>
<feature type="binding site" evidence="1">
    <location>
        <position position="300"/>
    </location>
    <ligand>
        <name>ATP</name>
        <dbReference type="ChEBI" id="CHEBI:30616"/>
    </ligand>
</feature>
<comment type="function">
    <text evidence="1">With EpmB is involved in the beta-lysylation step of the post-translational modification of translation elongation factor P (EF-P) on 'Lys-34'. Catalyzes the ATP-dependent activation of (R)-beta-lysine produced by EpmB, forming a lysyl-adenylate, from which the beta-lysyl moiety is then transferred to the epsilon-amino group of EF-P 'Lys-34'.</text>
</comment>
<comment type="catalytic activity">
    <reaction evidence="1">
        <text>D-beta-lysine + L-lysyl-[protein] + ATP = N(6)-((3R)-3,6-diaminohexanoyl)-L-lysyl-[protein] + AMP + diphosphate + H(+)</text>
        <dbReference type="Rhea" id="RHEA:83435"/>
        <dbReference type="Rhea" id="RHEA-COMP:9752"/>
        <dbReference type="Rhea" id="RHEA-COMP:20131"/>
        <dbReference type="ChEBI" id="CHEBI:15378"/>
        <dbReference type="ChEBI" id="CHEBI:29969"/>
        <dbReference type="ChEBI" id="CHEBI:30616"/>
        <dbReference type="ChEBI" id="CHEBI:33019"/>
        <dbReference type="ChEBI" id="CHEBI:84138"/>
        <dbReference type="ChEBI" id="CHEBI:156053"/>
        <dbReference type="ChEBI" id="CHEBI:456215"/>
    </reaction>
    <physiologicalReaction direction="left-to-right" evidence="1">
        <dbReference type="Rhea" id="RHEA:83436"/>
    </physiologicalReaction>
</comment>
<comment type="subunit">
    <text evidence="1">Homodimer.</text>
</comment>
<comment type="similarity">
    <text evidence="1">Belongs to the class-II aminoacyl-tRNA synthetase family. EpmA subfamily.</text>
</comment>
<keyword id="KW-0067">ATP-binding</keyword>
<keyword id="KW-0436">Ligase</keyword>
<keyword id="KW-0547">Nucleotide-binding</keyword>
<keyword id="KW-1185">Reference proteome</keyword>
<proteinExistence type="inferred from homology"/>
<dbReference type="EC" id="6.3.2.-" evidence="1"/>
<dbReference type="EMBL" id="CP000800">
    <property type="protein sequence ID" value="ABV17289.1"/>
    <property type="molecule type" value="Genomic_DNA"/>
</dbReference>
<dbReference type="RefSeq" id="WP_000004771.1">
    <property type="nucleotide sequence ID" value="NC_009801.1"/>
</dbReference>
<dbReference type="SMR" id="A7ZV28"/>
<dbReference type="GeneID" id="93777667"/>
<dbReference type="KEGG" id="ecw:EcE24377A_4714"/>
<dbReference type="HOGENOM" id="CLU_008255_1_1_6"/>
<dbReference type="Proteomes" id="UP000001122">
    <property type="component" value="Chromosome"/>
</dbReference>
<dbReference type="GO" id="GO:0005829">
    <property type="term" value="C:cytosol"/>
    <property type="evidence" value="ECO:0007669"/>
    <property type="project" value="TreeGrafter"/>
</dbReference>
<dbReference type="GO" id="GO:0016880">
    <property type="term" value="F:acid-ammonia (or amide) ligase activity"/>
    <property type="evidence" value="ECO:0007669"/>
    <property type="project" value="UniProtKB-UniRule"/>
</dbReference>
<dbReference type="GO" id="GO:0005524">
    <property type="term" value="F:ATP binding"/>
    <property type="evidence" value="ECO:0007669"/>
    <property type="project" value="UniProtKB-UniRule"/>
</dbReference>
<dbReference type="GO" id="GO:0004824">
    <property type="term" value="F:lysine-tRNA ligase activity"/>
    <property type="evidence" value="ECO:0007669"/>
    <property type="project" value="InterPro"/>
</dbReference>
<dbReference type="GO" id="GO:0000049">
    <property type="term" value="F:tRNA binding"/>
    <property type="evidence" value="ECO:0007669"/>
    <property type="project" value="TreeGrafter"/>
</dbReference>
<dbReference type="GO" id="GO:0006430">
    <property type="term" value="P:lysyl-tRNA aminoacylation"/>
    <property type="evidence" value="ECO:0007669"/>
    <property type="project" value="InterPro"/>
</dbReference>
<dbReference type="FunFam" id="3.30.930.10:FF:000017">
    <property type="entry name" value="Elongation factor P--(R)-beta-lysine ligase"/>
    <property type="match status" value="1"/>
</dbReference>
<dbReference type="Gene3D" id="3.30.930.10">
    <property type="entry name" value="Bira Bifunctional Protein, Domain 2"/>
    <property type="match status" value="1"/>
</dbReference>
<dbReference type="HAMAP" id="MF_00174">
    <property type="entry name" value="EF_P_modif_A"/>
    <property type="match status" value="1"/>
</dbReference>
<dbReference type="InterPro" id="IPR004364">
    <property type="entry name" value="Aa-tRNA-synt_II"/>
</dbReference>
<dbReference type="InterPro" id="IPR006195">
    <property type="entry name" value="aa-tRNA-synth_II"/>
</dbReference>
<dbReference type="InterPro" id="IPR045864">
    <property type="entry name" value="aa-tRNA-synth_II/BPL/LPL"/>
</dbReference>
<dbReference type="InterPro" id="IPR004525">
    <property type="entry name" value="EpmA"/>
</dbReference>
<dbReference type="InterPro" id="IPR018149">
    <property type="entry name" value="Lys-tRNA-synth_II_C"/>
</dbReference>
<dbReference type="NCBIfam" id="TIGR00462">
    <property type="entry name" value="genX"/>
    <property type="match status" value="1"/>
</dbReference>
<dbReference type="NCBIfam" id="NF006828">
    <property type="entry name" value="PRK09350.1"/>
    <property type="match status" value="1"/>
</dbReference>
<dbReference type="PANTHER" id="PTHR42918:SF6">
    <property type="entry name" value="ELONGATION FACTOR P--(R)-BETA-LYSINE LIGASE"/>
    <property type="match status" value="1"/>
</dbReference>
<dbReference type="PANTHER" id="PTHR42918">
    <property type="entry name" value="LYSYL-TRNA SYNTHETASE"/>
    <property type="match status" value="1"/>
</dbReference>
<dbReference type="Pfam" id="PF00152">
    <property type="entry name" value="tRNA-synt_2"/>
    <property type="match status" value="1"/>
</dbReference>
<dbReference type="PRINTS" id="PR00982">
    <property type="entry name" value="TRNASYNTHLYS"/>
</dbReference>
<dbReference type="SUPFAM" id="SSF55681">
    <property type="entry name" value="Class II aaRS and biotin synthetases"/>
    <property type="match status" value="1"/>
</dbReference>
<dbReference type="PROSITE" id="PS50862">
    <property type="entry name" value="AA_TRNA_LIGASE_II"/>
    <property type="match status" value="1"/>
</dbReference>